<proteinExistence type="inferred from homology"/>
<name>CLS_LISMO</name>
<sequence>MGLLAYLLVILLILNVFFAAVTVFLERRDTSATWAWLLVLTFVPIFGFIIYLIFGRKLSGKKIFDWKGQEKIGIQESTANQIEMIRQKEFPFSDPNVKKHRDLIYLLLVNDGAILTQDNEVELFVDGHEKFDALIADIEKAKDHIHLIYYIFHSDELGNRLMRVLERKAAEGLNVKIIYDAMGSRTTKKSFFRTFQKNGGLVRPFFPSKLPLINFRLNYRNHRKLAIIDGDVGYIGGFNIGDEYLGASKKFGYWRDTHLRVHGKAVYAMQTRFIMDWNSASSTHKIDYKARYFPTFHGKGHTSMQIVSSGPDSEWQQIKNGYIKMINAAKKTIYLQSPYFIPDASLLEAIKIAALSGVDVRVMIPNKPDHAFVYRATTNYAGELMETGAKIFIYDNGFIHAKTLVVDGEIASVGTANMDFRSFRLNFEVNAFIYEKQMVQKLEDAFLEDILKSYQLTPELYAKRSLWIKFKEAVSRLLSPIL</sequence>
<comment type="function">
    <text evidence="1">Catalyzes the reversible phosphatidyl group transfer from one phosphatidylglycerol molecule to another to form cardiolipin (CL) (diphosphatidylglycerol) and glycerol.</text>
</comment>
<comment type="catalytic activity">
    <reaction evidence="1">
        <text>2 a 1,2-diacyl-sn-glycero-3-phospho-(1'-sn-glycerol) = a cardiolipin + glycerol</text>
        <dbReference type="Rhea" id="RHEA:31451"/>
        <dbReference type="ChEBI" id="CHEBI:17754"/>
        <dbReference type="ChEBI" id="CHEBI:62237"/>
        <dbReference type="ChEBI" id="CHEBI:64716"/>
    </reaction>
</comment>
<comment type="subcellular location">
    <subcellularLocation>
        <location evidence="1">Cell membrane</location>
        <topology evidence="1">Multi-pass membrane protein</topology>
    </subcellularLocation>
</comment>
<comment type="similarity">
    <text evidence="1">Belongs to the phospholipase D family. Cardiolipin synthase subfamily.</text>
</comment>
<protein>
    <recommendedName>
        <fullName evidence="1">Cardiolipin synthase</fullName>
        <shortName evidence="1">CL synthase</shortName>
        <ecNumber evidence="1">2.7.8.-</ecNumber>
    </recommendedName>
</protein>
<accession>Q8Y4E3</accession>
<keyword id="KW-1003">Cell membrane</keyword>
<keyword id="KW-0444">Lipid biosynthesis</keyword>
<keyword id="KW-0443">Lipid metabolism</keyword>
<keyword id="KW-0472">Membrane</keyword>
<keyword id="KW-0594">Phospholipid biosynthesis</keyword>
<keyword id="KW-1208">Phospholipid metabolism</keyword>
<keyword id="KW-1185">Reference proteome</keyword>
<keyword id="KW-0677">Repeat</keyword>
<keyword id="KW-0808">Transferase</keyword>
<keyword id="KW-0812">Transmembrane</keyword>
<keyword id="KW-1133">Transmembrane helix</keyword>
<organism>
    <name type="scientific">Listeria monocytogenes serovar 1/2a (strain ATCC BAA-679 / EGD-e)</name>
    <dbReference type="NCBI Taxonomy" id="169963"/>
    <lineage>
        <taxon>Bacteria</taxon>
        <taxon>Bacillati</taxon>
        <taxon>Bacillota</taxon>
        <taxon>Bacilli</taxon>
        <taxon>Bacillales</taxon>
        <taxon>Listeriaceae</taxon>
        <taxon>Listeria</taxon>
    </lineage>
</organism>
<gene>
    <name type="primary">cls</name>
    <name type="ordered locus">lmo2503</name>
</gene>
<evidence type="ECO:0000255" key="1">
    <source>
        <dbReference type="HAMAP-Rule" id="MF_01916"/>
    </source>
</evidence>
<reference key="1">
    <citation type="journal article" date="2001" name="Science">
        <title>Comparative genomics of Listeria species.</title>
        <authorList>
            <person name="Glaser P."/>
            <person name="Frangeul L."/>
            <person name="Buchrieser C."/>
            <person name="Rusniok C."/>
            <person name="Amend A."/>
            <person name="Baquero F."/>
            <person name="Berche P."/>
            <person name="Bloecker H."/>
            <person name="Brandt P."/>
            <person name="Chakraborty T."/>
            <person name="Charbit A."/>
            <person name="Chetouani F."/>
            <person name="Couve E."/>
            <person name="de Daruvar A."/>
            <person name="Dehoux P."/>
            <person name="Domann E."/>
            <person name="Dominguez-Bernal G."/>
            <person name="Duchaud E."/>
            <person name="Durant L."/>
            <person name="Dussurget O."/>
            <person name="Entian K.-D."/>
            <person name="Fsihi H."/>
            <person name="Garcia-del Portillo F."/>
            <person name="Garrido P."/>
            <person name="Gautier L."/>
            <person name="Goebel W."/>
            <person name="Gomez-Lopez N."/>
            <person name="Hain T."/>
            <person name="Hauf J."/>
            <person name="Jackson D."/>
            <person name="Jones L.-M."/>
            <person name="Kaerst U."/>
            <person name="Kreft J."/>
            <person name="Kuhn M."/>
            <person name="Kunst F."/>
            <person name="Kurapkat G."/>
            <person name="Madueno E."/>
            <person name="Maitournam A."/>
            <person name="Mata Vicente J."/>
            <person name="Ng E."/>
            <person name="Nedjari H."/>
            <person name="Nordsiek G."/>
            <person name="Novella S."/>
            <person name="de Pablos B."/>
            <person name="Perez-Diaz J.-C."/>
            <person name="Purcell R."/>
            <person name="Remmel B."/>
            <person name="Rose M."/>
            <person name="Schlueter T."/>
            <person name="Simoes N."/>
            <person name="Tierrez A."/>
            <person name="Vazquez-Boland J.-A."/>
            <person name="Voss H."/>
            <person name="Wehland J."/>
            <person name="Cossart P."/>
        </authorList>
    </citation>
    <scope>NUCLEOTIDE SEQUENCE [LARGE SCALE GENOMIC DNA]</scope>
    <source>
        <strain>ATCC BAA-679 / EGD-e</strain>
    </source>
</reference>
<feature type="chain" id="PRO_0000201258" description="Cardiolipin synthase">
    <location>
        <begin position="1"/>
        <end position="482"/>
    </location>
</feature>
<feature type="transmembrane region" description="Helical" evidence="1">
    <location>
        <begin position="4"/>
        <end position="24"/>
    </location>
</feature>
<feature type="transmembrane region" description="Helical" evidence="1">
    <location>
        <begin position="34"/>
        <end position="54"/>
    </location>
</feature>
<feature type="domain" description="PLD phosphodiesterase 1" evidence="1">
    <location>
        <begin position="217"/>
        <end position="244"/>
    </location>
</feature>
<feature type="domain" description="PLD phosphodiesterase 2" evidence="1">
    <location>
        <begin position="395"/>
        <end position="422"/>
    </location>
</feature>
<feature type="active site" evidence="1">
    <location>
        <position position="222"/>
    </location>
</feature>
<feature type="active site" evidence="1">
    <location>
        <position position="224"/>
    </location>
</feature>
<feature type="active site" evidence="1">
    <location>
        <position position="229"/>
    </location>
</feature>
<feature type="active site" evidence="1">
    <location>
        <position position="400"/>
    </location>
</feature>
<feature type="active site" evidence="1">
    <location>
        <position position="402"/>
    </location>
</feature>
<feature type="active site" evidence="1">
    <location>
        <position position="407"/>
    </location>
</feature>
<dbReference type="EC" id="2.7.8.-" evidence="1"/>
<dbReference type="EMBL" id="AL591983">
    <property type="protein sequence ID" value="CAD00581.1"/>
    <property type="molecule type" value="Genomic_DNA"/>
</dbReference>
<dbReference type="PIR" id="AG1387">
    <property type="entry name" value="AG1387"/>
</dbReference>
<dbReference type="RefSeq" id="NP_466026.1">
    <property type="nucleotide sequence ID" value="NC_003210.1"/>
</dbReference>
<dbReference type="RefSeq" id="WP_003722636.1">
    <property type="nucleotide sequence ID" value="NZ_CP149495.1"/>
</dbReference>
<dbReference type="SMR" id="Q8Y4E3"/>
<dbReference type="STRING" id="169963.gene:17595214"/>
<dbReference type="PaxDb" id="169963-lmo2503"/>
<dbReference type="EnsemblBacteria" id="CAD00581">
    <property type="protein sequence ID" value="CAD00581"/>
    <property type="gene ID" value="CAD00581"/>
</dbReference>
<dbReference type="GeneID" id="987903"/>
<dbReference type="KEGG" id="lmo:lmo2503"/>
<dbReference type="PATRIC" id="fig|169963.11.peg.2563"/>
<dbReference type="eggNOG" id="COG1502">
    <property type="taxonomic scope" value="Bacteria"/>
</dbReference>
<dbReference type="HOGENOM" id="CLU_038053_1_1_9"/>
<dbReference type="OrthoDB" id="9762009at2"/>
<dbReference type="PhylomeDB" id="Q8Y4E3"/>
<dbReference type="BioCyc" id="LMON169963:LMO2503-MONOMER"/>
<dbReference type="Proteomes" id="UP000000817">
    <property type="component" value="Chromosome"/>
</dbReference>
<dbReference type="GO" id="GO:0005886">
    <property type="term" value="C:plasma membrane"/>
    <property type="evidence" value="ECO:0007669"/>
    <property type="project" value="UniProtKB-SubCell"/>
</dbReference>
<dbReference type="GO" id="GO:0008808">
    <property type="term" value="F:cardiolipin synthase activity"/>
    <property type="evidence" value="ECO:0007669"/>
    <property type="project" value="InterPro"/>
</dbReference>
<dbReference type="GO" id="GO:0032049">
    <property type="term" value="P:cardiolipin biosynthetic process"/>
    <property type="evidence" value="ECO:0007669"/>
    <property type="project" value="InterPro"/>
</dbReference>
<dbReference type="CDD" id="cd09110">
    <property type="entry name" value="PLDc_CLS_1"/>
    <property type="match status" value="1"/>
</dbReference>
<dbReference type="CDD" id="cd09112">
    <property type="entry name" value="PLDc_CLS_2"/>
    <property type="match status" value="1"/>
</dbReference>
<dbReference type="FunFam" id="3.30.870.10:FF:000014">
    <property type="entry name" value="Cardiolipin synthase"/>
    <property type="match status" value="1"/>
</dbReference>
<dbReference type="FunFam" id="3.30.870.10:FF:000021">
    <property type="entry name" value="Cardiolipin synthase"/>
    <property type="match status" value="1"/>
</dbReference>
<dbReference type="Gene3D" id="3.30.870.10">
    <property type="entry name" value="Endonuclease Chain A"/>
    <property type="match status" value="2"/>
</dbReference>
<dbReference type="HAMAP" id="MF_01916">
    <property type="entry name" value="Cardiolipin_synth_Cls"/>
    <property type="match status" value="1"/>
</dbReference>
<dbReference type="InterPro" id="IPR030874">
    <property type="entry name" value="Cardiolipin_synth_Firmi"/>
</dbReference>
<dbReference type="InterPro" id="IPR022924">
    <property type="entry name" value="Cardiolipin_synthase"/>
</dbReference>
<dbReference type="InterPro" id="IPR027379">
    <property type="entry name" value="CLS_N"/>
</dbReference>
<dbReference type="InterPro" id="IPR025202">
    <property type="entry name" value="PLD-like_dom"/>
</dbReference>
<dbReference type="InterPro" id="IPR001736">
    <property type="entry name" value="PLipase_D/transphosphatidylase"/>
</dbReference>
<dbReference type="NCBIfam" id="TIGR04265">
    <property type="entry name" value="bac_cardiolipin"/>
    <property type="match status" value="1"/>
</dbReference>
<dbReference type="PANTHER" id="PTHR21248">
    <property type="entry name" value="CARDIOLIPIN SYNTHASE"/>
    <property type="match status" value="1"/>
</dbReference>
<dbReference type="PANTHER" id="PTHR21248:SF22">
    <property type="entry name" value="PHOSPHOLIPASE D"/>
    <property type="match status" value="1"/>
</dbReference>
<dbReference type="Pfam" id="PF13091">
    <property type="entry name" value="PLDc_2"/>
    <property type="match status" value="2"/>
</dbReference>
<dbReference type="Pfam" id="PF13396">
    <property type="entry name" value="PLDc_N"/>
    <property type="match status" value="1"/>
</dbReference>
<dbReference type="SMART" id="SM00155">
    <property type="entry name" value="PLDc"/>
    <property type="match status" value="2"/>
</dbReference>
<dbReference type="SUPFAM" id="SSF56024">
    <property type="entry name" value="Phospholipase D/nuclease"/>
    <property type="match status" value="2"/>
</dbReference>
<dbReference type="PROSITE" id="PS50035">
    <property type="entry name" value="PLD"/>
    <property type="match status" value="2"/>
</dbReference>